<proteinExistence type="evidence at transcript level"/>
<gene>
    <name type="primary">rpsa</name>
    <name type="ORF">TNeu119p20.1</name>
</gene>
<feature type="initiator methionine" description="Removed" evidence="1">
    <location>
        <position position="1"/>
    </location>
</feature>
<feature type="chain" id="PRO_0000371574" description="Small ribosomal subunit protein uS2">
    <location>
        <begin position="2"/>
        <end position="306"/>
    </location>
</feature>
<feature type="repeat" description="[DE]-W-[ST] 1">
    <location>
        <begin position="230"/>
        <end position="232"/>
    </location>
</feature>
<feature type="repeat" description="[DE]-W-[ST] 2">
    <location>
        <begin position="245"/>
        <end position="247"/>
    </location>
</feature>
<feature type="repeat" description="[DE]-W-[ST] 3">
    <location>
        <begin position="276"/>
        <end position="278"/>
    </location>
</feature>
<feature type="repeat" description="[DE]-W-[ST] 4">
    <location>
        <begin position="286"/>
        <end position="288"/>
    </location>
</feature>
<feature type="repeat" description="[DE]-W-[ST] 5">
    <location>
        <begin position="304"/>
        <end position="306"/>
    </location>
</feature>
<feature type="region of interest" description="Laminin-binding" evidence="1">
    <location>
        <begin position="161"/>
        <end position="180"/>
    </location>
</feature>
<feature type="region of interest" description="Laminin-binding" evidence="1">
    <location>
        <begin position="205"/>
        <end position="229"/>
    </location>
</feature>
<feature type="region of interest" description="Laminin-binding" evidence="1">
    <location>
        <begin position="242"/>
        <end position="306"/>
    </location>
</feature>
<feature type="region of interest" description="Disordered" evidence="2">
    <location>
        <begin position="261"/>
        <end position="306"/>
    </location>
</feature>
<feature type="compositionally biased region" description="Polar residues" evidence="2">
    <location>
        <begin position="277"/>
        <end position="306"/>
    </location>
</feature>
<feature type="site" description="Cleavage; by ST3; site 1" evidence="1">
    <location>
        <begin position="115"/>
        <end position="116"/>
    </location>
</feature>
<feature type="site" description="Cleavage; by ST3; site 2" evidence="1">
    <location>
        <begin position="133"/>
        <end position="134"/>
    </location>
</feature>
<feature type="modified residue" description="N-acetylserine" evidence="1">
    <location>
        <position position="2"/>
    </location>
</feature>
<comment type="function">
    <text evidence="1">Required for the assembly and/or stability of the 40S ribosomal subunit. Required for the processing of the 20S rRNA-precursor to mature 18S rRNA in a late step of the maturation of 40S ribosomal subunits. Also functions as a cell surface receptor for laminin. Plays a role in cell adhesion to the basement membrane and in the consequent activation of signaling transduction pathways. May play a role in cell fate determination and tissue morphogenesis.</text>
</comment>
<comment type="subunit">
    <text evidence="1">Monomer (37LRP) and homodimer (67LR). Component of the small ribosomal subunit. Mature ribosomes consist of a small (40S) and a large (60S) subunit. The 40S subunit contains about 33 different proteins and 1 molecule of RNA (18S). The 60S subunit contains about 49 different proteins and 3 molecules of RNA (28S, 5.8S and 5S). Interacts with rps21. Interacts with several laminins including at least lamb1. Interacts with mdk.</text>
</comment>
<comment type="subcellular location">
    <subcellularLocation>
        <location evidence="1">Cell membrane</location>
    </subcellularLocation>
    <subcellularLocation>
        <location evidence="1">Cytoplasm</location>
    </subcellularLocation>
    <subcellularLocation>
        <location evidence="1">Nucleus</location>
    </subcellularLocation>
    <text evidence="1">67LR is found at the surface of the plasma membrane, with its C-terminal laminin-binding domain accessible to extracellular ligands. 37LRP is found at the cell surface, in the cytoplasm and in the nucleus.</text>
</comment>
<comment type="PTM">
    <text evidence="1">Acylated. Acylation may be a prerequisite for conversion of the monomeric 37 kDa laminin receptor precursor (37LRP) to the mature dimeric 67 kDa laminin receptor (67LR), and may provide a mechanism for membrane association.</text>
</comment>
<comment type="PTM">
    <text evidence="1">Cleaved by stromelysin-3 (ST3) at the cell surface. Cleavage by stromelysin-3 may be a mechanism to alter cell-extracellular matrix interactions.</text>
</comment>
<comment type="miscellaneous">
    <text>This protein appears to have acquired a second function as a laminin receptor specifically in the vertebrate lineage.</text>
</comment>
<comment type="similarity">
    <text evidence="1">Belongs to the universal ribosomal protein uS2 family.</text>
</comment>
<sequence length="306" mass="33998">MSGGLDVLQMKEEDVLKFLAAGTHLGGTNLDFQMEQYIYKRKSDGIYIINLKRTWEKLLLAARAIVAIENPADVCVISSRNTGQRAVLKFASASGATPIAGRFTPGTFTNQIQAAFREPRLLVVTDPRADHQPLTEASYVNIPTIALCNTDSPLRYVDIAIPCNNKGAHSVGLMWWMLAREVLRMRGTISREHPWEVMPDLYFYRDPEEIEKEEQAAAEKATTKEEYQGEWTAPVAEFPQAEVADWSEGVQVPSVPIQQFPAERPEIPAAKPAAEDWSSQPASTDDWSAAPTAQASEWTGTTTEWS</sequence>
<keyword id="KW-0007">Acetylation</keyword>
<keyword id="KW-1003">Cell membrane</keyword>
<keyword id="KW-0963">Cytoplasm</keyword>
<keyword id="KW-0472">Membrane</keyword>
<keyword id="KW-0539">Nucleus</keyword>
<keyword id="KW-0675">Receptor</keyword>
<keyword id="KW-1185">Reference proteome</keyword>
<keyword id="KW-0677">Repeat</keyword>
<keyword id="KW-0687">Ribonucleoprotein</keyword>
<keyword id="KW-0689">Ribosomal protein</keyword>
<name>RSSA_XENTR</name>
<dbReference type="EMBL" id="CR942700">
    <property type="protein sequence ID" value="CAJ82410.1"/>
    <property type="molecule type" value="mRNA"/>
</dbReference>
<dbReference type="EMBL" id="BC061298">
    <property type="protein sequence ID" value="AAH61298.1"/>
    <property type="molecule type" value="mRNA"/>
</dbReference>
<dbReference type="EMBL" id="BC168799">
    <property type="protein sequence ID" value="AAI68799.1"/>
    <property type="molecule type" value="mRNA"/>
</dbReference>
<dbReference type="RefSeq" id="NP_989068.1">
    <property type="nucleotide sequence ID" value="NM_203737.1"/>
</dbReference>
<dbReference type="SMR" id="Q6P8D1"/>
<dbReference type="FunCoup" id="Q6P8D1">
    <property type="interactions" value="2351"/>
</dbReference>
<dbReference type="STRING" id="8364.ENSXETP00000031435"/>
<dbReference type="PaxDb" id="8364-ENSXETP00000057070"/>
<dbReference type="DNASU" id="394665"/>
<dbReference type="GeneID" id="394665"/>
<dbReference type="KEGG" id="xtr:394665"/>
<dbReference type="AGR" id="Xenbase:XB-GENE-972235"/>
<dbReference type="CTD" id="3921"/>
<dbReference type="Xenbase" id="XB-GENE-972235">
    <property type="gene designation" value="rpsa"/>
</dbReference>
<dbReference type="eggNOG" id="KOG0830">
    <property type="taxonomic scope" value="Eukaryota"/>
</dbReference>
<dbReference type="HOGENOM" id="CLU_058171_1_0_1"/>
<dbReference type="InParanoid" id="Q6P8D1"/>
<dbReference type="OMA" id="VKNFFEP"/>
<dbReference type="OrthoDB" id="414863at2759"/>
<dbReference type="PhylomeDB" id="Q6P8D1"/>
<dbReference type="TreeFam" id="TF300100"/>
<dbReference type="Reactome" id="R-XTR-156827">
    <property type="pathway name" value="L13a-mediated translational silencing of Ceruloplasmin expression"/>
</dbReference>
<dbReference type="Reactome" id="R-XTR-1799339">
    <property type="pathway name" value="SRP-dependent cotranslational protein targeting to membrane"/>
</dbReference>
<dbReference type="Reactome" id="R-XTR-72689">
    <property type="pathway name" value="Formation of a pool of free 40S subunits"/>
</dbReference>
<dbReference type="Reactome" id="R-XTR-72695">
    <property type="pathway name" value="Formation of the ternary complex, and subsequently, the 43S complex"/>
</dbReference>
<dbReference type="Reactome" id="R-XTR-72702">
    <property type="pathway name" value="Ribosomal scanning and start codon recognition"/>
</dbReference>
<dbReference type="Reactome" id="R-XTR-72706">
    <property type="pathway name" value="GTP hydrolysis and joining of the 60S ribosomal subunit"/>
</dbReference>
<dbReference type="Reactome" id="R-XTR-975956">
    <property type="pathway name" value="Nonsense Mediated Decay (NMD) independent of the Exon Junction Complex (EJC)"/>
</dbReference>
<dbReference type="Reactome" id="R-XTR-975957">
    <property type="pathway name" value="Nonsense Mediated Decay (NMD) enhanced by the Exon Junction Complex (EJC)"/>
</dbReference>
<dbReference type="Proteomes" id="UP000008143">
    <property type="component" value="Chromosome 4"/>
</dbReference>
<dbReference type="Bgee" id="ENSXETG00000027344">
    <property type="expression patterns" value="Expressed in skeletal muscle tissue and 23 other cell types or tissues"/>
</dbReference>
<dbReference type="GO" id="GO:0022627">
    <property type="term" value="C:cytosolic small ribosomal subunit"/>
    <property type="evidence" value="ECO:0007669"/>
    <property type="project" value="UniProtKB-UniRule"/>
</dbReference>
<dbReference type="GO" id="GO:0005634">
    <property type="term" value="C:nucleus"/>
    <property type="evidence" value="ECO:0007669"/>
    <property type="project" value="UniProtKB-SubCell"/>
</dbReference>
<dbReference type="GO" id="GO:0005886">
    <property type="term" value="C:plasma membrane"/>
    <property type="evidence" value="ECO:0007669"/>
    <property type="project" value="UniProtKB-SubCell"/>
</dbReference>
<dbReference type="GO" id="GO:0043236">
    <property type="term" value="F:laminin binding"/>
    <property type="evidence" value="ECO:0007669"/>
    <property type="project" value="UniProtKB-UniRule"/>
</dbReference>
<dbReference type="GO" id="GO:0005055">
    <property type="term" value="F:laminin receptor activity"/>
    <property type="evidence" value="ECO:0007669"/>
    <property type="project" value="UniProtKB-UniRule"/>
</dbReference>
<dbReference type="GO" id="GO:0003735">
    <property type="term" value="F:structural constituent of ribosome"/>
    <property type="evidence" value="ECO:0007669"/>
    <property type="project" value="UniProtKB-UniRule"/>
</dbReference>
<dbReference type="GO" id="GO:0000028">
    <property type="term" value="P:ribosomal small subunit assembly"/>
    <property type="evidence" value="ECO:0007669"/>
    <property type="project" value="UniProtKB-UniRule"/>
</dbReference>
<dbReference type="GO" id="GO:0006364">
    <property type="term" value="P:rRNA processing"/>
    <property type="evidence" value="ECO:0000315"/>
    <property type="project" value="Xenbase"/>
</dbReference>
<dbReference type="GO" id="GO:0048536">
    <property type="term" value="P:spleen development"/>
    <property type="evidence" value="ECO:0000315"/>
    <property type="project" value="Xenbase"/>
</dbReference>
<dbReference type="GO" id="GO:0006412">
    <property type="term" value="P:translation"/>
    <property type="evidence" value="ECO:0007669"/>
    <property type="project" value="UniProtKB-UniRule"/>
</dbReference>
<dbReference type="CDD" id="cd01425">
    <property type="entry name" value="RPS2"/>
    <property type="match status" value="1"/>
</dbReference>
<dbReference type="FunFam" id="3.40.50.10490:FF:000012">
    <property type="entry name" value="40S ribosomal protein SA"/>
    <property type="match status" value="1"/>
</dbReference>
<dbReference type="Gene3D" id="3.40.50.10490">
    <property type="entry name" value="Glucose-6-phosphate isomerase like protein, domain 1"/>
    <property type="match status" value="1"/>
</dbReference>
<dbReference type="HAMAP" id="MF_03015">
    <property type="entry name" value="Ribosomal_S2_euk"/>
    <property type="match status" value="1"/>
</dbReference>
<dbReference type="HAMAP" id="MF_03016">
    <property type="entry name" value="Ribosomal_S2_laminin_receptor"/>
    <property type="match status" value="1"/>
</dbReference>
<dbReference type="InterPro" id="IPR001865">
    <property type="entry name" value="Ribosomal_uS2"/>
</dbReference>
<dbReference type="InterPro" id="IPR032281">
    <property type="entry name" value="Ribosomal_uS2_C"/>
</dbReference>
<dbReference type="InterPro" id="IPR018130">
    <property type="entry name" value="Ribosomal_uS2_CS"/>
</dbReference>
<dbReference type="InterPro" id="IPR027498">
    <property type="entry name" value="Ribosomal_uS2_euk"/>
</dbReference>
<dbReference type="InterPro" id="IPR005707">
    <property type="entry name" value="Ribosomal_uS2_euk/arc"/>
</dbReference>
<dbReference type="InterPro" id="IPR023591">
    <property type="entry name" value="Ribosomal_uS2_flav_dom_sf"/>
</dbReference>
<dbReference type="InterPro" id="IPR027504">
    <property type="entry name" value="Ribosomal_uS2_vert"/>
</dbReference>
<dbReference type="NCBIfam" id="TIGR01012">
    <property type="entry name" value="uS2_euk_arch"/>
    <property type="match status" value="1"/>
</dbReference>
<dbReference type="PANTHER" id="PTHR11489">
    <property type="entry name" value="40S RIBOSOMAL PROTEIN SA"/>
    <property type="match status" value="1"/>
</dbReference>
<dbReference type="Pfam" id="PF16122">
    <property type="entry name" value="40S_SA_C"/>
    <property type="match status" value="1"/>
</dbReference>
<dbReference type="Pfam" id="PF00318">
    <property type="entry name" value="Ribosomal_S2"/>
    <property type="match status" value="2"/>
</dbReference>
<dbReference type="PRINTS" id="PR00395">
    <property type="entry name" value="RIBOSOMALS2"/>
</dbReference>
<dbReference type="SUPFAM" id="SSF52313">
    <property type="entry name" value="Ribosomal protein S2"/>
    <property type="match status" value="1"/>
</dbReference>
<dbReference type="PROSITE" id="PS00962">
    <property type="entry name" value="RIBOSOMAL_S2_1"/>
    <property type="match status" value="1"/>
</dbReference>
<dbReference type="PROSITE" id="PS00963">
    <property type="entry name" value="RIBOSOMAL_S2_2"/>
    <property type="match status" value="1"/>
</dbReference>
<evidence type="ECO:0000255" key="1">
    <source>
        <dbReference type="HAMAP-Rule" id="MF_03016"/>
    </source>
</evidence>
<evidence type="ECO:0000256" key="2">
    <source>
        <dbReference type="SAM" id="MobiDB-lite"/>
    </source>
</evidence>
<evidence type="ECO:0000305" key="3"/>
<accession>Q6P8D1</accession>
<protein>
    <recommendedName>
        <fullName evidence="1">Small ribosomal subunit protein uS2</fullName>
    </recommendedName>
    <alternativeName>
        <fullName evidence="1">37 kDa laminin receptor precursor</fullName>
        <shortName evidence="1">37LRP</shortName>
    </alternativeName>
    <alternativeName>
        <fullName evidence="1">37/67 kDa laminin receptor</fullName>
        <shortName evidence="1">LRP/LR</shortName>
    </alternativeName>
    <alternativeName>
        <fullName evidence="3">40S ribosomal protein SA</fullName>
    </alternativeName>
    <alternativeName>
        <fullName evidence="1">67 kDa laminin receptor</fullName>
        <shortName evidence="1">67LR</shortName>
    </alternativeName>
    <alternativeName>
        <fullName evidence="1">Laminin receptor 1</fullName>
        <shortName evidence="1">LamR</shortName>
    </alternativeName>
    <alternativeName>
        <fullName evidence="1">Laminin-binding protein precursor p40</fullName>
        <shortName evidence="1">LBP/p40</shortName>
    </alternativeName>
</protein>
<reference key="1">
    <citation type="submission" date="2006-10" db="EMBL/GenBank/DDBJ databases">
        <authorList>
            <consortium name="Sanger Xenopus tropicalis EST/cDNA project"/>
        </authorList>
    </citation>
    <scope>NUCLEOTIDE SEQUENCE [LARGE SCALE MRNA]</scope>
    <source>
        <tissue>Neurula</tissue>
    </source>
</reference>
<reference key="2">
    <citation type="submission" date="2008-08" db="EMBL/GenBank/DDBJ databases">
        <authorList>
            <consortium name="NIH - Xenopus Gene Collection (XGC) project"/>
        </authorList>
    </citation>
    <scope>NUCLEOTIDE SEQUENCE [LARGE SCALE MRNA]</scope>
    <source>
        <strain>N6</strain>
        <tissue>Embryo</tissue>
        <tissue>Heart</tissue>
    </source>
</reference>
<organism>
    <name type="scientific">Xenopus tropicalis</name>
    <name type="common">Western clawed frog</name>
    <name type="synonym">Silurana tropicalis</name>
    <dbReference type="NCBI Taxonomy" id="8364"/>
    <lineage>
        <taxon>Eukaryota</taxon>
        <taxon>Metazoa</taxon>
        <taxon>Chordata</taxon>
        <taxon>Craniata</taxon>
        <taxon>Vertebrata</taxon>
        <taxon>Euteleostomi</taxon>
        <taxon>Amphibia</taxon>
        <taxon>Batrachia</taxon>
        <taxon>Anura</taxon>
        <taxon>Pipoidea</taxon>
        <taxon>Pipidae</taxon>
        <taxon>Xenopodinae</taxon>
        <taxon>Xenopus</taxon>
        <taxon>Silurana</taxon>
    </lineage>
</organism>